<dbReference type="EMBL" id="CP001172">
    <property type="protein sequence ID" value="ACJ56907.1"/>
    <property type="molecule type" value="Genomic_DNA"/>
</dbReference>
<dbReference type="RefSeq" id="WP_000818995.1">
    <property type="nucleotide sequence ID" value="NZ_CP001172.1"/>
</dbReference>
<dbReference type="SMR" id="B7H297"/>
<dbReference type="HOGENOM" id="CLU_085114_3_0_6"/>
<dbReference type="Proteomes" id="UP000006924">
    <property type="component" value="Chromosome"/>
</dbReference>
<dbReference type="GO" id="GO:0005886">
    <property type="term" value="C:plasma membrane"/>
    <property type="evidence" value="ECO:0007669"/>
    <property type="project" value="UniProtKB-SubCell"/>
</dbReference>
<dbReference type="GO" id="GO:0045259">
    <property type="term" value="C:proton-transporting ATP synthase complex"/>
    <property type="evidence" value="ECO:0007669"/>
    <property type="project" value="UniProtKB-KW"/>
</dbReference>
<dbReference type="GO" id="GO:0046933">
    <property type="term" value="F:proton-transporting ATP synthase activity, rotational mechanism"/>
    <property type="evidence" value="ECO:0007669"/>
    <property type="project" value="UniProtKB-UniRule"/>
</dbReference>
<dbReference type="Gene3D" id="1.10.520.20">
    <property type="entry name" value="N-terminal domain of the delta subunit of the F1F0-ATP synthase"/>
    <property type="match status" value="1"/>
</dbReference>
<dbReference type="HAMAP" id="MF_01416">
    <property type="entry name" value="ATP_synth_delta_bact"/>
    <property type="match status" value="1"/>
</dbReference>
<dbReference type="InterPro" id="IPR026015">
    <property type="entry name" value="ATP_synth_OSCP/delta_N_sf"/>
</dbReference>
<dbReference type="InterPro" id="IPR020781">
    <property type="entry name" value="ATPase_OSCP/d_CS"/>
</dbReference>
<dbReference type="InterPro" id="IPR000711">
    <property type="entry name" value="ATPase_OSCP/dsu"/>
</dbReference>
<dbReference type="NCBIfam" id="TIGR01145">
    <property type="entry name" value="ATP_synt_delta"/>
    <property type="match status" value="1"/>
</dbReference>
<dbReference type="NCBIfam" id="NF004402">
    <property type="entry name" value="PRK05758.2-2"/>
    <property type="match status" value="1"/>
</dbReference>
<dbReference type="PANTHER" id="PTHR11910">
    <property type="entry name" value="ATP SYNTHASE DELTA CHAIN"/>
    <property type="match status" value="1"/>
</dbReference>
<dbReference type="Pfam" id="PF00213">
    <property type="entry name" value="OSCP"/>
    <property type="match status" value="1"/>
</dbReference>
<dbReference type="PRINTS" id="PR00125">
    <property type="entry name" value="ATPASEDELTA"/>
</dbReference>
<dbReference type="SUPFAM" id="SSF47928">
    <property type="entry name" value="N-terminal domain of the delta subunit of the F1F0-ATP synthase"/>
    <property type="match status" value="1"/>
</dbReference>
<dbReference type="PROSITE" id="PS00389">
    <property type="entry name" value="ATPASE_DELTA"/>
    <property type="match status" value="1"/>
</dbReference>
<keyword id="KW-0066">ATP synthesis</keyword>
<keyword id="KW-0997">Cell inner membrane</keyword>
<keyword id="KW-1003">Cell membrane</keyword>
<keyword id="KW-0139">CF(1)</keyword>
<keyword id="KW-0375">Hydrogen ion transport</keyword>
<keyword id="KW-0406">Ion transport</keyword>
<keyword id="KW-0472">Membrane</keyword>
<keyword id="KW-0813">Transport</keyword>
<gene>
    <name evidence="1" type="primary">atpH</name>
    <name type="ordered locus">ABBFA_003368</name>
</gene>
<organism>
    <name type="scientific">Acinetobacter baumannii (strain AB307-0294)</name>
    <dbReference type="NCBI Taxonomy" id="557600"/>
    <lineage>
        <taxon>Bacteria</taxon>
        <taxon>Pseudomonadati</taxon>
        <taxon>Pseudomonadota</taxon>
        <taxon>Gammaproteobacteria</taxon>
        <taxon>Moraxellales</taxon>
        <taxon>Moraxellaceae</taxon>
        <taxon>Acinetobacter</taxon>
        <taxon>Acinetobacter calcoaceticus/baumannii complex</taxon>
    </lineage>
</organism>
<feature type="chain" id="PRO_1000184628" description="ATP synthase subunit delta">
    <location>
        <begin position="1"/>
        <end position="178"/>
    </location>
</feature>
<sequence length="178" mass="19509">MAELLTLARPYAKAAFAYASEQGATDNWSNALQVLSAAVQDEAFSAYLNRPELTPAEQVKLFAKVLGEDQSQAVSNFLTLLADNDRLVLLPEIAAEYEQLKSQNNNNVDVVIESAFPLTAEQEQLLKSALEKRFNSTVTVSVEVKPELIAGVVIRAGDQVIDDSALNKLEKMRTRLLA</sequence>
<name>ATPD_ACIB3</name>
<proteinExistence type="inferred from homology"/>
<accession>B7H297</accession>
<protein>
    <recommendedName>
        <fullName evidence="1">ATP synthase subunit delta</fullName>
    </recommendedName>
    <alternativeName>
        <fullName evidence="1">ATP synthase F(1) sector subunit delta</fullName>
    </alternativeName>
    <alternativeName>
        <fullName evidence="1">F-type ATPase subunit delta</fullName>
        <shortName evidence="1">F-ATPase subunit delta</shortName>
    </alternativeName>
</protein>
<reference key="1">
    <citation type="journal article" date="2008" name="J. Bacteriol.">
        <title>Comparative genome sequence analysis of multidrug-resistant Acinetobacter baumannii.</title>
        <authorList>
            <person name="Adams M.D."/>
            <person name="Goglin K."/>
            <person name="Molyneaux N."/>
            <person name="Hujer K.M."/>
            <person name="Lavender H."/>
            <person name="Jamison J.J."/>
            <person name="MacDonald I.J."/>
            <person name="Martin K.M."/>
            <person name="Russo T."/>
            <person name="Campagnari A.A."/>
            <person name="Hujer A.M."/>
            <person name="Bonomo R.A."/>
            <person name="Gill S.R."/>
        </authorList>
    </citation>
    <scope>NUCLEOTIDE SEQUENCE [LARGE SCALE GENOMIC DNA]</scope>
    <source>
        <strain>AB307-0294</strain>
    </source>
</reference>
<evidence type="ECO:0000255" key="1">
    <source>
        <dbReference type="HAMAP-Rule" id="MF_01416"/>
    </source>
</evidence>
<comment type="function">
    <text evidence="1">F(1)F(0) ATP synthase produces ATP from ADP in the presence of a proton or sodium gradient. F-type ATPases consist of two structural domains, F(1) containing the extramembraneous catalytic core and F(0) containing the membrane proton channel, linked together by a central stalk and a peripheral stalk. During catalysis, ATP synthesis in the catalytic domain of F(1) is coupled via a rotary mechanism of the central stalk subunits to proton translocation.</text>
</comment>
<comment type="function">
    <text evidence="1">This protein is part of the stalk that links CF(0) to CF(1). It either transmits conformational changes from CF(0) to CF(1) or is implicated in proton conduction.</text>
</comment>
<comment type="subunit">
    <text evidence="1">F-type ATPases have 2 components, F(1) - the catalytic core - and F(0) - the membrane proton channel. F(1) has five subunits: alpha(3), beta(3), gamma(1), delta(1), epsilon(1). F(0) has three main subunits: a(1), b(2) and c(10-14). The alpha and beta chains form an alternating ring which encloses part of the gamma chain. F(1) is attached to F(0) by a central stalk formed by the gamma and epsilon chains, while a peripheral stalk is formed by the delta and b chains.</text>
</comment>
<comment type="subcellular location">
    <subcellularLocation>
        <location evidence="1">Cell inner membrane</location>
        <topology evidence="1">Peripheral membrane protein</topology>
    </subcellularLocation>
</comment>
<comment type="similarity">
    <text evidence="1">Belongs to the ATPase delta chain family.</text>
</comment>